<organism>
    <name type="scientific">Saccharomyces cerevisiae (strain ATCC 204508 / S288c)</name>
    <name type="common">Baker's yeast</name>
    <dbReference type="NCBI Taxonomy" id="559292"/>
    <lineage>
        <taxon>Eukaryota</taxon>
        <taxon>Fungi</taxon>
        <taxon>Dikarya</taxon>
        <taxon>Ascomycota</taxon>
        <taxon>Saccharomycotina</taxon>
        <taxon>Saccharomycetes</taxon>
        <taxon>Saccharomycetales</taxon>
        <taxon>Saccharomycetaceae</taxon>
        <taxon>Saccharomyces</taxon>
    </lineage>
</organism>
<accession>Q02606</accession>
<accession>D6W3Z8</accession>
<name>CIP1_YEAST</name>
<comment type="function">
    <text evidence="3 4">Acts as an inhibitor of the CDC28/CLN2 cyclin-dependent kinase complex (PubMed:27005485, PubMed:28676626). Stabilizes the CDC28 inhibitor SIC1 (PubMed:27005485). Negatively regulates the G1/S phase transition (PubMed:27005485). Contributes to osmostress-induced transitory G1 delay (PubMed:28676626).</text>
</comment>
<comment type="subunit">
    <text evidence="3 4">Interact with the CDC28/CLN2 complex.</text>
</comment>
<comment type="subcellular location">
    <subcellularLocation>
        <location evidence="2 4">Cytoplasm</location>
    </subcellularLocation>
    <subcellularLocation>
        <location evidence="2 4">Nucleus</location>
    </subcellularLocation>
    <text evidence="4">Localizes to the nucleus upon osmotic stress.</text>
</comment>
<comment type="induction">
    <text evidence="3 4">Cell cycle-regulated gene mainly expressed at G1 by the transcription factor MCM1 (PubMed:28676626). Expression is induced upon stress (PubMed:27005485, PubMed:28676626). Expression also depends on transcription factors on MSN2 and MSN4 (PubMed:28676626).</text>
</comment>
<comment type="PTM">
    <text evidence="3 4">Phosphorylated during S phase in a CDC28-dependent manner (PubMed:27005485). Phosphorylated at Thr-65 and Thr-73 by HOG1 under osmotic stress (PubMed:28676626). The phosphorylations of Thr-65 and Thr-73 are necessary for CIP1-induced growth inhibition (PubMed:28676626).</text>
</comment>
<comment type="disruption phenotype">
    <text evidence="3 4">Accelerates the G1/S phase transition.</text>
</comment>
<proteinExistence type="evidence at protein level"/>
<dbReference type="EMBL" id="U33335">
    <property type="protein sequence ID" value="AAB68091.1"/>
    <property type="molecule type" value="Genomic_DNA"/>
</dbReference>
<dbReference type="EMBL" id="BK006949">
    <property type="protein sequence ID" value="DAA11414.1"/>
    <property type="molecule type" value="Genomic_DNA"/>
</dbReference>
<dbReference type="PIR" id="S59679">
    <property type="entry name" value="S59679"/>
</dbReference>
<dbReference type="RefSeq" id="NP_015311.1">
    <property type="nucleotide sequence ID" value="NM_001183828.1"/>
</dbReference>
<dbReference type="BioGRID" id="36163">
    <property type="interactions" value="75"/>
</dbReference>
<dbReference type="DIP" id="DIP-2703N"/>
<dbReference type="FunCoup" id="Q02606">
    <property type="interactions" value="28"/>
</dbReference>
<dbReference type="IntAct" id="Q02606">
    <property type="interactions" value="4"/>
</dbReference>
<dbReference type="MINT" id="Q02606"/>
<dbReference type="STRING" id="4932.YPL014W"/>
<dbReference type="iPTMnet" id="Q02606"/>
<dbReference type="PaxDb" id="4932-YPL014W"/>
<dbReference type="PeptideAtlas" id="Q02606"/>
<dbReference type="EnsemblFungi" id="YPL014W_mRNA">
    <property type="protein sequence ID" value="YPL014W"/>
    <property type="gene ID" value="YPL014W"/>
</dbReference>
<dbReference type="GeneID" id="856093"/>
<dbReference type="KEGG" id="sce:YPL014W"/>
<dbReference type="AGR" id="SGD:S000005935"/>
<dbReference type="SGD" id="S000005935">
    <property type="gene designation" value="CIP1"/>
</dbReference>
<dbReference type="VEuPathDB" id="FungiDB:YPL014W"/>
<dbReference type="eggNOG" id="ENOG502S29D">
    <property type="taxonomic scope" value="Eukaryota"/>
</dbReference>
<dbReference type="HOGENOM" id="CLU_726055_0_0_1"/>
<dbReference type="InParanoid" id="Q02606"/>
<dbReference type="OMA" id="WMSIDEQ"/>
<dbReference type="OrthoDB" id="3979912at2759"/>
<dbReference type="BioCyc" id="YEAST:G3O-33933-MONOMER"/>
<dbReference type="BioGRID-ORCS" id="856093">
    <property type="hits" value="1 hit in 10 CRISPR screens"/>
</dbReference>
<dbReference type="PRO" id="PR:Q02606"/>
<dbReference type="Proteomes" id="UP000002311">
    <property type="component" value="Chromosome XVI"/>
</dbReference>
<dbReference type="RNAct" id="Q02606">
    <property type="molecule type" value="protein"/>
</dbReference>
<dbReference type="GO" id="GO:0005737">
    <property type="term" value="C:cytoplasm"/>
    <property type="evidence" value="ECO:0007005"/>
    <property type="project" value="SGD"/>
</dbReference>
<dbReference type="GO" id="GO:0005634">
    <property type="term" value="C:nucleus"/>
    <property type="evidence" value="ECO:0007005"/>
    <property type="project" value="SGD"/>
</dbReference>
<dbReference type="GO" id="GO:0004861">
    <property type="term" value="F:cyclin-dependent protein serine/threonine kinase inhibitor activity"/>
    <property type="evidence" value="ECO:0000314"/>
    <property type="project" value="SGD"/>
</dbReference>
<dbReference type="GO" id="GO:0000082">
    <property type="term" value="P:G1/S transition of mitotic cell cycle"/>
    <property type="evidence" value="ECO:0000315"/>
    <property type="project" value="SGD"/>
</dbReference>
<protein>
    <recommendedName>
        <fullName evidence="5">Cyclin-dependent kinase inhibitor CIP1</fullName>
    </recommendedName>
    <alternativeName>
        <fullName evidence="5">CDK1-interacting protein 1</fullName>
    </alternativeName>
</protein>
<keyword id="KW-0131">Cell cycle</keyword>
<keyword id="KW-0963">Cytoplasm</keyword>
<keyword id="KW-0539">Nucleus</keyword>
<keyword id="KW-0597">Phosphoprotein</keyword>
<keyword id="KW-1185">Reference proteome</keyword>
<reference key="1">
    <citation type="journal article" date="1997" name="Nature">
        <title>The nucleotide sequence of Saccharomyces cerevisiae chromosome XVI.</title>
        <authorList>
            <person name="Bussey H."/>
            <person name="Storms R.K."/>
            <person name="Ahmed A."/>
            <person name="Albermann K."/>
            <person name="Allen E."/>
            <person name="Ansorge W."/>
            <person name="Araujo R."/>
            <person name="Aparicio A."/>
            <person name="Barrell B.G."/>
            <person name="Badcock K."/>
            <person name="Benes V."/>
            <person name="Botstein D."/>
            <person name="Bowman S."/>
            <person name="Brueckner M."/>
            <person name="Carpenter J."/>
            <person name="Cherry J.M."/>
            <person name="Chung E."/>
            <person name="Churcher C.M."/>
            <person name="Coster F."/>
            <person name="Davis K."/>
            <person name="Davis R.W."/>
            <person name="Dietrich F.S."/>
            <person name="Delius H."/>
            <person name="DiPaolo T."/>
            <person name="Dubois E."/>
            <person name="Duesterhoeft A."/>
            <person name="Duncan M."/>
            <person name="Floeth M."/>
            <person name="Fortin N."/>
            <person name="Friesen J.D."/>
            <person name="Fritz C."/>
            <person name="Goffeau A."/>
            <person name="Hall J."/>
            <person name="Hebling U."/>
            <person name="Heumann K."/>
            <person name="Hilbert H."/>
            <person name="Hillier L.W."/>
            <person name="Hunicke-Smith S."/>
            <person name="Hyman R.W."/>
            <person name="Johnston M."/>
            <person name="Kalman S."/>
            <person name="Kleine K."/>
            <person name="Komp C."/>
            <person name="Kurdi O."/>
            <person name="Lashkari D."/>
            <person name="Lew H."/>
            <person name="Lin A."/>
            <person name="Lin D."/>
            <person name="Louis E.J."/>
            <person name="Marathe R."/>
            <person name="Messenguy F."/>
            <person name="Mewes H.-W."/>
            <person name="Mirtipati S."/>
            <person name="Moestl D."/>
            <person name="Mueller-Auer S."/>
            <person name="Namath A."/>
            <person name="Nentwich U."/>
            <person name="Oefner P."/>
            <person name="Pearson D."/>
            <person name="Petel F.X."/>
            <person name="Pohl T.M."/>
            <person name="Purnelle B."/>
            <person name="Rajandream M.A."/>
            <person name="Rechmann S."/>
            <person name="Rieger M."/>
            <person name="Riles L."/>
            <person name="Roberts D."/>
            <person name="Schaefer M."/>
            <person name="Scharfe M."/>
            <person name="Scherens B."/>
            <person name="Schramm S."/>
            <person name="Schroeder M."/>
            <person name="Sdicu A.-M."/>
            <person name="Tettelin H."/>
            <person name="Urrestarazu L.A."/>
            <person name="Ushinsky S."/>
            <person name="Vierendeels F."/>
            <person name="Vissers S."/>
            <person name="Voss H."/>
            <person name="Walsh S.V."/>
            <person name="Wambutt R."/>
            <person name="Wang Y."/>
            <person name="Wedler E."/>
            <person name="Wedler H."/>
            <person name="Winnett E."/>
            <person name="Zhong W.-W."/>
            <person name="Zollner A."/>
            <person name="Vo D.H."/>
            <person name="Hani J."/>
        </authorList>
    </citation>
    <scope>NUCLEOTIDE SEQUENCE [LARGE SCALE GENOMIC DNA]</scope>
    <source>
        <strain>ATCC 204508 / S288c</strain>
    </source>
</reference>
<reference key="2">
    <citation type="journal article" date="2014" name="G3 (Bethesda)">
        <title>The reference genome sequence of Saccharomyces cerevisiae: Then and now.</title>
        <authorList>
            <person name="Engel S.R."/>
            <person name="Dietrich F.S."/>
            <person name="Fisk D.G."/>
            <person name="Binkley G."/>
            <person name="Balakrishnan R."/>
            <person name="Costanzo M.C."/>
            <person name="Dwight S.S."/>
            <person name="Hitz B.C."/>
            <person name="Karra K."/>
            <person name="Nash R.S."/>
            <person name="Weng S."/>
            <person name="Wong E.D."/>
            <person name="Lloyd P."/>
            <person name="Skrzypek M.S."/>
            <person name="Miyasato S.R."/>
            <person name="Simison M."/>
            <person name="Cherry J.M."/>
        </authorList>
    </citation>
    <scope>GENOME REANNOTATION</scope>
    <source>
        <strain>ATCC 204508 / S288c</strain>
    </source>
</reference>
<reference key="3">
    <citation type="journal article" date="2003" name="Nature">
        <title>Global analysis of protein localization in budding yeast.</title>
        <authorList>
            <person name="Huh W.-K."/>
            <person name="Falvo J.V."/>
            <person name="Gerke L.C."/>
            <person name="Carroll A.S."/>
            <person name="Howson R.W."/>
            <person name="Weissman J.S."/>
            <person name="O'Shea E.K."/>
        </authorList>
    </citation>
    <scope>SUBCELLULAR LOCATION [LARGE SCALE ANALYSIS]</scope>
</reference>
<reference key="4">
    <citation type="journal article" date="2009" name="Science">
        <title>Global analysis of Cdk1 substrate phosphorylation sites provides insights into evolution.</title>
        <authorList>
            <person name="Holt L.J."/>
            <person name="Tuch B.B."/>
            <person name="Villen J."/>
            <person name="Johnson A.D."/>
            <person name="Gygi S.P."/>
            <person name="Morgan D.O."/>
        </authorList>
    </citation>
    <scope>IDENTIFICATION BY MASS SPECTROMETRY [LARGE SCALE ANALYSIS]</scope>
</reference>
<reference key="5">
    <citation type="journal article" date="2016" name="Genes Cells">
        <title>Identification of YPL014W (Cip1) as a novel negative regulator of cyclin-dependent kinase in Saccharomyces cerevisiae.</title>
        <authorList>
            <person name="Ren P."/>
            <person name="Malik A."/>
            <person name="Zeng F."/>
        </authorList>
    </citation>
    <scope>FUNCTION</scope>
    <scope>DISRUPTION PHENOTYPE</scope>
    <scope>INDUCTION</scope>
    <scope>PHOSPHORYLATION</scope>
    <scope>SUBUNIT</scope>
</reference>
<reference key="6">
    <citation type="journal article" date="2017" name="Nat. Commun.">
        <title>Yeast Cip1 is activated by environmental stress to inhibit Cdk1-G1 cyclins via Mcm1 and Msn2/4.</title>
        <authorList>
            <person name="Chang Y.L."/>
            <person name="Tseng S.F."/>
            <person name="Huang Y.C."/>
            <person name="Shen Z.J."/>
            <person name="Hsu P.H."/>
            <person name="Hsieh M.H."/>
            <person name="Yang C.W."/>
            <person name="Tognetti S."/>
            <person name="Canal B."/>
            <person name="Subirana L."/>
            <person name="Wang C.W."/>
            <person name="Chen H.T."/>
            <person name="Lin C.Y."/>
            <person name="Posas F."/>
            <person name="Teng S.C."/>
        </authorList>
    </citation>
    <scope>INDUCTION</scope>
    <scope>FUNCTION</scope>
    <scope>DISRUPTION PHENOTYPE</scope>
    <scope>PHOSPHORYLATION AT THR-65; THR-69 AND THR-73</scope>
    <scope>MUTAGENESIS OF THR-65 AND THR-73</scope>
    <scope>SUBCELLULAR LOCATION</scope>
    <scope>SUBUNIT</scope>
</reference>
<sequence length="381" mass="42477">MLLERLHKRLHAGSSRRSQENKDKNCKPEDALPIQPEAQHQTQDPQPLLNCDYDDMIAFDRNLSTPVFTPVMTPINNSSSNQAKSSDASYFPPYLNANRTRQNSASSLASSVSDFAQNFKQHTFYNNNAQFTSFTPQFVGLLLEVYQNTCSDPTITPFDTTNPPSGILNRVAKAAIQQSELQQLDIGCDRNSWLLTLVRQRLLQEVRKDGYLSRNTSLTSLPPPPPPQFSEMLRVPSPFVNADITDPIPLSNTNSNPNVSSTTSLTNTLNWYSLQRSNVSMKNRNGSSQYISELQPQPILARTNSNNSVSNSNAFSLLTPTPTTDSAFNFNIALLSRQRSNIISSPLASTRLPTANVSTEESSILPNESLKLKRDLLRLKR</sequence>
<gene>
    <name evidence="5" type="primary">CIP1</name>
    <name type="ordered locus">YPL014W</name>
</gene>
<evidence type="ECO:0000256" key="1">
    <source>
        <dbReference type="SAM" id="MobiDB-lite"/>
    </source>
</evidence>
<evidence type="ECO:0000269" key="2">
    <source>
    </source>
</evidence>
<evidence type="ECO:0000269" key="3">
    <source>
    </source>
</evidence>
<evidence type="ECO:0000269" key="4">
    <source>
    </source>
</evidence>
<evidence type="ECO:0000303" key="5">
    <source>
    </source>
</evidence>
<feature type="chain" id="PRO_0000240703" description="Cyclin-dependent kinase inhibitor CIP1">
    <location>
        <begin position="1"/>
        <end position="381"/>
    </location>
</feature>
<feature type="region of interest" description="Disordered" evidence="1">
    <location>
        <begin position="1"/>
        <end position="30"/>
    </location>
</feature>
<feature type="compositionally biased region" description="Basic residues" evidence="1">
    <location>
        <begin position="1"/>
        <end position="11"/>
    </location>
</feature>
<feature type="compositionally biased region" description="Basic and acidic residues" evidence="1">
    <location>
        <begin position="17"/>
        <end position="30"/>
    </location>
</feature>
<feature type="modified residue" description="Phosphothreonine" evidence="4">
    <location>
        <position position="65"/>
    </location>
</feature>
<feature type="modified residue" description="Phosphothreonine" evidence="4">
    <location>
        <position position="69"/>
    </location>
</feature>
<feature type="modified residue" description="Phosphothreonine" evidence="4">
    <location>
        <position position="73"/>
    </location>
</feature>
<feature type="mutagenesis site" description="Impairs CIP1-induced growth inhibition; when associated with A-73." evidence="4">
    <original>T</original>
    <variation>A</variation>
    <location>
        <position position="65"/>
    </location>
</feature>
<feature type="mutagenesis site" description="Impairs CIP1-induced growth inhibition; when associated with A-65." evidence="4">
    <original>T</original>
    <variation>A</variation>
    <location>
        <position position="73"/>
    </location>
</feature>